<proteinExistence type="predicted"/>
<organism>
    <name type="scientific">Swinepox virus (strain Kasza)</name>
    <name type="common">SWPV</name>
    <dbReference type="NCBI Taxonomy" id="10277"/>
    <lineage>
        <taxon>Viruses</taxon>
        <taxon>Varidnaviria</taxon>
        <taxon>Bamfordvirae</taxon>
        <taxon>Nucleocytoviricota</taxon>
        <taxon>Pokkesviricetes</taxon>
        <taxon>Chitovirales</taxon>
        <taxon>Poxviridae</taxon>
        <taxon>Chordopoxvirinae</taxon>
        <taxon>Suipoxvirus</taxon>
        <taxon>Swinepox virus</taxon>
    </lineage>
</organism>
<organismHost>
    <name type="scientific">Sus scrofa</name>
    <name type="common">Pig</name>
    <dbReference type="NCBI Taxonomy" id="9823"/>
</organismHost>
<gene>
    <name type="ORF">C18L</name>
</gene>
<sequence>MHLKNEVNNNMFVFTLCILLYSSFCYFFYIEKILQHTKPIYTNYGQLCICKINKYKYGYSVNIFYRR</sequence>
<dbReference type="EMBL" id="L22013">
    <property type="protein sequence ID" value="AAC37853.1"/>
    <property type="molecule type" value="Genomic_DNA"/>
</dbReference>
<dbReference type="SMR" id="P32217"/>
<dbReference type="KEGG" id="vg:932404"/>
<reference key="1">
    <citation type="journal article" date="1993" name="Virology">
        <title>DNA sequence analysis of conserved and unique regions of swinepox virus: identification of genetic elements supporting phenotypic observations including a novel G protein-coupled receptor homologue.</title>
        <authorList>
            <person name="Massung R.F."/>
            <person name="Jayarama V."/>
            <person name="Moyer R.W."/>
        </authorList>
    </citation>
    <scope>NUCLEOTIDE SEQUENCE [GENOMIC DNA]</scope>
</reference>
<name>VC18_SWPVK</name>
<protein>
    <recommendedName>
        <fullName>Uncharacterized protein C18</fullName>
    </recommendedName>
</protein>
<accession>P32217</accession>
<feature type="chain" id="PRO_0000099758" description="Uncharacterized protein C18">
    <location>
        <begin position="1"/>
        <end position="67"/>
    </location>
</feature>